<gene>
    <name evidence="1" type="primary">dapE</name>
    <name type="ordered locus">azo2007</name>
</gene>
<organism>
    <name type="scientific">Azoarcus sp. (strain BH72)</name>
    <dbReference type="NCBI Taxonomy" id="418699"/>
    <lineage>
        <taxon>Bacteria</taxon>
        <taxon>Pseudomonadati</taxon>
        <taxon>Pseudomonadota</taxon>
        <taxon>Betaproteobacteria</taxon>
        <taxon>Rhodocyclales</taxon>
        <taxon>Zoogloeaceae</taxon>
        <taxon>Azoarcus</taxon>
    </lineage>
</organism>
<proteinExistence type="inferred from homology"/>
<reference key="1">
    <citation type="journal article" date="2006" name="Nat. Biotechnol.">
        <title>Complete genome of the mutualistic, N2-fixing grass endophyte Azoarcus sp. strain BH72.</title>
        <authorList>
            <person name="Krause A."/>
            <person name="Ramakumar A."/>
            <person name="Bartels D."/>
            <person name="Battistoni F."/>
            <person name="Bekel T."/>
            <person name="Boch J."/>
            <person name="Boehm M."/>
            <person name="Friedrich F."/>
            <person name="Hurek T."/>
            <person name="Krause L."/>
            <person name="Linke B."/>
            <person name="McHardy A.C."/>
            <person name="Sarkar A."/>
            <person name="Schneiker S."/>
            <person name="Syed A.A."/>
            <person name="Thauer R."/>
            <person name="Vorhoelter F.-J."/>
            <person name="Weidner S."/>
            <person name="Puehler A."/>
            <person name="Reinhold-Hurek B."/>
            <person name="Kaiser O."/>
            <person name="Goesmann A."/>
        </authorList>
    </citation>
    <scope>NUCLEOTIDE SEQUENCE [LARGE SCALE GENOMIC DNA]</scope>
    <source>
        <strain>BH72</strain>
    </source>
</reference>
<sequence>MSLPDTPTLALACELISRSSVTPEDAGCLQLIAQRLAPLGFVCERIDIGGVSNLWARRGSARPLLCFAGHTDVVPTGPLDAWQSPPFEPTIRDGHLYGRGAADMKSSLAGFVTAIERFVAAHPDHAGSIALLLTSDEEGVATCGTVKVVEALAARGERLDYCVVGEPTSVKTLGDMIKNGRRGSLSGTLRVKGRQGHVAYPHLARNPIHELAPALAELAAERWDDGNEFFPPTTWQVSNIHAGTGANNVIPGVCDVLFNFRFGSVSTADALKARTHAILDRHGLDYELDWHLSGKPFITGRGQLVAALGNAIRETVGVETELSTTGGTSDGRFIADICAEVVEFGPVNASIHQVNEHIAVDAVEPLSKIYERTLRALLTA</sequence>
<evidence type="ECO:0000255" key="1">
    <source>
        <dbReference type="HAMAP-Rule" id="MF_01690"/>
    </source>
</evidence>
<name>DAPE_AZOSB</name>
<comment type="function">
    <text evidence="1">Catalyzes the hydrolysis of N-succinyl-L,L-diaminopimelic acid (SDAP), forming succinate and LL-2,6-diaminopimelate (DAP), an intermediate involved in the bacterial biosynthesis of lysine and meso-diaminopimelic acid, an essential component of bacterial cell walls.</text>
</comment>
<comment type="catalytic activity">
    <reaction evidence="1">
        <text>N-succinyl-(2S,6S)-2,6-diaminopimelate + H2O = (2S,6S)-2,6-diaminopimelate + succinate</text>
        <dbReference type="Rhea" id="RHEA:22608"/>
        <dbReference type="ChEBI" id="CHEBI:15377"/>
        <dbReference type="ChEBI" id="CHEBI:30031"/>
        <dbReference type="ChEBI" id="CHEBI:57609"/>
        <dbReference type="ChEBI" id="CHEBI:58087"/>
        <dbReference type="EC" id="3.5.1.18"/>
    </reaction>
</comment>
<comment type="cofactor">
    <cofactor evidence="1">
        <name>Zn(2+)</name>
        <dbReference type="ChEBI" id="CHEBI:29105"/>
    </cofactor>
    <cofactor evidence="1">
        <name>Co(2+)</name>
        <dbReference type="ChEBI" id="CHEBI:48828"/>
    </cofactor>
    <text evidence="1">Binds 2 Zn(2+) or Co(2+) ions per subunit.</text>
</comment>
<comment type="pathway">
    <text evidence="1">Amino-acid biosynthesis; L-lysine biosynthesis via DAP pathway; LL-2,6-diaminopimelate from (S)-tetrahydrodipicolinate (succinylase route): step 3/3.</text>
</comment>
<comment type="subunit">
    <text evidence="1">Homodimer.</text>
</comment>
<comment type="similarity">
    <text evidence="1">Belongs to the peptidase M20A family. DapE subfamily.</text>
</comment>
<accession>A1K719</accession>
<protein>
    <recommendedName>
        <fullName evidence="1">Succinyl-diaminopimelate desuccinylase</fullName>
        <shortName evidence="1">SDAP desuccinylase</shortName>
        <ecNumber evidence="1">3.5.1.18</ecNumber>
    </recommendedName>
    <alternativeName>
        <fullName evidence="1">N-succinyl-LL-2,6-diaminoheptanedioate amidohydrolase</fullName>
    </alternativeName>
</protein>
<feature type="chain" id="PRO_0000375466" description="Succinyl-diaminopimelate desuccinylase">
    <location>
        <begin position="1"/>
        <end position="380"/>
    </location>
</feature>
<feature type="active site" evidence="1">
    <location>
        <position position="72"/>
    </location>
</feature>
<feature type="active site" description="Proton acceptor" evidence="1">
    <location>
        <position position="137"/>
    </location>
</feature>
<feature type="binding site" evidence="1">
    <location>
        <position position="70"/>
    </location>
    <ligand>
        <name>Zn(2+)</name>
        <dbReference type="ChEBI" id="CHEBI:29105"/>
        <label>1</label>
    </ligand>
</feature>
<feature type="binding site" evidence="1">
    <location>
        <position position="103"/>
    </location>
    <ligand>
        <name>Zn(2+)</name>
        <dbReference type="ChEBI" id="CHEBI:29105"/>
        <label>1</label>
    </ligand>
</feature>
<feature type="binding site" evidence="1">
    <location>
        <position position="103"/>
    </location>
    <ligand>
        <name>Zn(2+)</name>
        <dbReference type="ChEBI" id="CHEBI:29105"/>
        <label>2</label>
    </ligand>
</feature>
<feature type="binding site" evidence="1">
    <location>
        <position position="138"/>
    </location>
    <ligand>
        <name>Zn(2+)</name>
        <dbReference type="ChEBI" id="CHEBI:29105"/>
        <label>2</label>
    </ligand>
</feature>
<feature type="binding site" evidence="1">
    <location>
        <position position="166"/>
    </location>
    <ligand>
        <name>Zn(2+)</name>
        <dbReference type="ChEBI" id="CHEBI:29105"/>
        <label>1</label>
    </ligand>
</feature>
<feature type="binding site" evidence="1">
    <location>
        <position position="352"/>
    </location>
    <ligand>
        <name>Zn(2+)</name>
        <dbReference type="ChEBI" id="CHEBI:29105"/>
        <label>2</label>
    </ligand>
</feature>
<dbReference type="EC" id="3.5.1.18" evidence="1"/>
<dbReference type="EMBL" id="AM406670">
    <property type="protein sequence ID" value="CAL94624.1"/>
    <property type="molecule type" value="Genomic_DNA"/>
</dbReference>
<dbReference type="RefSeq" id="WP_011765738.1">
    <property type="nucleotide sequence ID" value="NC_008702.1"/>
</dbReference>
<dbReference type="SMR" id="A1K719"/>
<dbReference type="STRING" id="62928.azo2007"/>
<dbReference type="KEGG" id="aoa:dqs_2162"/>
<dbReference type="KEGG" id="azo:azo2007"/>
<dbReference type="eggNOG" id="COG0624">
    <property type="taxonomic scope" value="Bacteria"/>
</dbReference>
<dbReference type="HOGENOM" id="CLU_021802_4_0_4"/>
<dbReference type="OrthoDB" id="9809784at2"/>
<dbReference type="UniPathway" id="UPA00034">
    <property type="reaction ID" value="UER00021"/>
</dbReference>
<dbReference type="Proteomes" id="UP000002588">
    <property type="component" value="Chromosome"/>
</dbReference>
<dbReference type="GO" id="GO:0008777">
    <property type="term" value="F:acetylornithine deacetylase activity"/>
    <property type="evidence" value="ECO:0007669"/>
    <property type="project" value="TreeGrafter"/>
</dbReference>
<dbReference type="GO" id="GO:0050897">
    <property type="term" value="F:cobalt ion binding"/>
    <property type="evidence" value="ECO:0007669"/>
    <property type="project" value="UniProtKB-UniRule"/>
</dbReference>
<dbReference type="GO" id="GO:0009014">
    <property type="term" value="F:succinyl-diaminopimelate desuccinylase activity"/>
    <property type="evidence" value="ECO:0007669"/>
    <property type="project" value="UniProtKB-UniRule"/>
</dbReference>
<dbReference type="GO" id="GO:0008270">
    <property type="term" value="F:zinc ion binding"/>
    <property type="evidence" value="ECO:0007669"/>
    <property type="project" value="UniProtKB-UniRule"/>
</dbReference>
<dbReference type="GO" id="GO:0019877">
    <property type="term" value="P:diaminopimelate biosynthetic process"/>
    <property type="evidence" value="ECO:0007669"/>
    <property type="project" value="UniProtKB-UniRule"/>
</dbReference>
<dbReference type="GO" id="GO:0006526">
    <property type="term" value="P:L-arginine biosynthetic process"/>
    <property type="evidence" value="ECO:0007669"/>
    <property type="project" value="TreeGrafter"/>
</dbReference>
<dbReference type="GO" id="GO:0009089">
    <property type="term" value="P:lysine biosynthetic process via diaminopimelate"/>
    <property type="evidence" value="ECO:0007669"/>
    <property type="project" value="UniProtKB-UniRule"/>
</dbReference>
<dbReference type="CDD" id="cd03891">
    <property type="entry name" value="M20_DapE_proteobac"/>
    <property type="match status" value="1"/>
</dbReference>
<dbReference type="FunFam" id="3.30.70.360:FF:000011">
    <property type="entry name" value="Succinyl-diaminopimelate desuccinylase"/>
    <property type="match status" value="1"/>
</dbReference>
<dbReference type="FunFam" id="3.40.630.10:FF:000005">
    <property type="entry name" value="Succinyl-diaminopimelate desuccinylase"/>
    <property type="match status" value="1"/>
</dbReference>
<dbReference type="Gene3D" id="1.10.150.900">
    <property type="match status" value="1"/>
</dbReference>
<dbReference type="Gene3D" id="3.30.70.360">
    <property type="match status" value="1"/>
</dbReference>
<dbReference type="Gene3D" id="3.40.630.10">
    <property type="entry name" value="Zn peptidases"/>
    <property type="match status" value="1"/>
</dbReference>
<dbReference type="HAMAP" id="MF_01690">
    <property type="entry name" value="DapE"/>
    <property type="match status" value="1"/>
</dbReference>
<dbReference type="InterPro" id="IPR036264">
    <property type="entry name" value="Bact_exopeptidase_dim_dom"/>
</dbReference>
<dbReference type="InterPro" id="IPR005941">
    <property type="entry name" value="DapE_proteobac"/>
</dbReference>
<dbReference type="InterPro" id="IPR002933">
    <property type="entry name" value="Peptidase_M20"/>
</dbReference>
<dbReference type="InterPro" id="IPR011650">
    <property type="entry name" value="Peptidase_M20_dimer"/>
</dbReference>
<dbReference type="InterPro" id="IPR050072">
    <property type="entry name" value="Peptidase_M20A"/>
</dbReference>
<dbReference type="NCBIfam" id="TIGR01246">
    <property type="entry name" value="dapE_proteo"/>
    <property type="match status" value="1"/>
</dbReference>
<dbReference type="NCBIfam" id="NF009557">
    <property type="entry name" value="PRK13009.1"/>
    <property type="match status" value="1"/>
</dbReference>
<dbReference type="PANTHER" id="PTHR43808">
    <property type="entry name" value="ACETYLORNITHINE DEACETYLASE"/>
    <property type="match status" value="1"/>
</dbReference>
<dbReference type="PANTHER" id="PTHR43808:SF31">
    <property type="entry name" value="N-ACETYL-L-CITRULLINE DEACETYLASE"/>
    <property type="match status" value="1"/>
</dbReference>
<dbReference type="Pfam" id="PF07687">
    <property type="entry name" value="M20_dimer"/>
    <property type="match status" value="1"/>
</dbReference>
<dbReference type="Pfam" id="PF01546">
    <property type="entry name" value="Peptidase_M20"/>
    <property type="match status" value="1"/>
</dbReference>
<dbReference type="SUPFAM" id="SSF55031">
    <property type="entry name" value="Bacterial exopeptidase dimerisation domain"/>
    <property type="match status" value="1"/>
</dbReference>
<dbReference type="SUPFAM" id="SSF53187">
    <property type="entry name" value="Zn-dependent exopeptidases"/>
    <property type="match status" value="1"/>
</dbReference>
<dbReference type="PROSITE" id="PS00759">
    <property type="entry name" value="ARGE_DAPE_CPG2_2"/>
    <property type="match status" value="1"/>
</dbReference>
<keyword id="KW-0028">Amino-acid biosynthesis</keyword>
<keyword id="KW-0170">Cobalt</keyword>
<keyword id="KW-0220">Diaminopimelate biosynthesis</keyword>
<keyword id="KW-0378">Hydrolase</keyword>
<keyword id="KW-0457">Lysine biosynthesis</keyword>
<keyword id="KW-0479">Metal-binding</keyword>
<keyword id="KW-1185">Reference proteome</keyword>
<keyword id="KW-0862">Zinc</keyword>